<dbReference type="EMBL" id="AE014075">
    <property type="protein sequence ID" value="AAN81764.1"/>
    <property type="molecule type" value="Genomic_DNA"/>
</dbReference>
<dbReference type="RefSeq" id="WP_000517479.1">
    <property type="nucleotide sequence ID" value="NZ_CP051263.1"/>
</dbReference>
<dbReference type="SMR" id="Q8FEJ4"/>
<dbReference type="STRING" id="199310.c3315"/>
<dbReference type="GeneID" id="89517564"/>
<dbReference type="KEGG" id="ecc:c3315"/>
<dbReference type="eggNOG" id="COG2919">
    <property type="taxonomic scope" value="Bacteria"/>
</dbReference>
<dbReference type="HOGENOM" id="CLU_134863_5_2_6"/>
<dbReference type="BioCyc" id="ECOL199310:C3315-MONOMER"/>
<dbReference type="Proteomes" id="UP000001410">
    <property type="component" value="Chromosome"/>
</dbReference>
<dbReference type="GO" id="GO:0032153">
    <property type="term" value="C:cell division site"/>
    <property type="evidence" value="ECO:0007669"/>
    <property type="project" value="UniProtKB-UniRule"/>
</dbReference>
<dbReference type="GO" id="GO:0030428">
    <property type="term" value="C:cell septum"/>
    <property type="evidence" value="ECO:0007669"/>
    <property type="project" value="TreeGrafter"/>
</dbReference>
<dbReference type="GO" id="GO:0005886">
    <property type="term" value="C:plasma membrane"/>
    <property type="evidence" value="ECO:0007669"/>
    <property type="project" value="UniProtKB-SubCell"/>
</dbReference>
<dbReference type="GO" id="GO:0043093">
    <property type="term" value="P:FtsZ-dependent cytokinesis"/>
    <property type="evidence" value="ECO:0007669"/>
    <property type="project" value="UniProtKB-UniRule"/>
</dbReference>
<dbReference type="FunFam" id="1.20.5.400:FF:000001">
    <property type="entry name" value="Cell division protein FtsB"/>
    <property type="match status" value="1"/>
</dbReference>
<dbReference type="Gene3D" id="1.20.5.400">
    <property type="match status" value="1"/>
</dbReference>
<dbReference type="HAMAP" id="MF_00599">
    <property type="entry name" value="FtsB"/>
    <property type="match status" value="1"/>
</dbReference>
<dbReference type="InterPro" id="IPR023081">
    <property type="entry name" value="Cell_div_FtsB"/>
</dbReference>
<dbReference type="InterPro" id="IPR007060">
    <property type="entry name" value="FtsL/DivIC"/>
</dbReference>
<dbReference type="NCBIfam" id="NF002058">
    <property type="entry name" value="PRK00888.1"/>
    <property type="match status" value="1"/>
</dbReference>
<dbReference type="PANTHER" id="PTHR37485">
    <property type="entry name" value="CELL DIVISION PROTEIN FTSB"/>
    <property type="match status" value="1"/>
</dbReference>
<dbReference type="PANTHER" id="PTHR37485:SF1">
    <property type="entry name" value="CELL DIVISION PROTEIN FTSB"/>
    <property type="match status" value="1"/>
</dbReference>
<dbReference type="Pfam" id="PF04977">
    <property type="entry name" value="DivIC"/>
    <property type="match status" value="1"/>
</dbReference>
<feature type="chain" id="PRO_0000214442" description="Cell division protein FtsB">
    <location>
        <begin position="1"/>
        <end position="103"/>
    </location>
</feature>
<feature type="topological domain" description="Cytoplasmic" evidence="1">
    <location>
        <begin position="1"/>
        <end position="3"/>
    </location>
</feature>
<feature type="transmembrane region" description="Helical" evidence="1">
    <location>
        <begin position="4"/>
        <end position="21"/>
    </location>
</feature>
<feature type="topological domain" description="Periplasmic" evidence="1">
    <location>
        <begin position="22"/>
        <end position="103"/>
    </location>
</feature>
<feature type="coiled-coil region" evidence="1">
    <location>
        <begin position="31"/>
        <end position="71"/>
    </location>
</feature>
<name>FTSB_ECOL6</name>
<reference key="1">
    <citation type="journal article" date="2002" name="Proc. Natl. Acad. Sci. U.S.A.">
        <title>Extensive mosaic structure revealed by the complete genome sequence of uropathogenic Escherichia coli.</title>
        <authorList>
            <person name="Welch R.A."/>
            <person name="Burland V."/>
            <person name="Plunkett G. III"/>
            <person name="Redford P."/>
            <person name="Roesch P."/>
            <person name="Rasko D."/>
            <person name="Buckles E.L."/>
            <person name="Liou S.-R."/>
            <person name="Boutin A."/>
            <person name="Hackett J."/>
            <person name="Stroud D."/>
            <person name="Mayhew G.F."/>
            <person name="Rose D.J."/>
            <person name="Zhou S."/>
            <person name="Schwartz D.C."/>
            <person name="Perna N.T."/>
            <person name="Mobley H.L.T."/>
            <person name="Donnenberg M.S."/>
            <person name="Blattner F.R."/>
        </authorList>
    </citation>
    <scope>NUCLEOTIDE SEQUENCE [LARGE SCALE GENOMIC DNA]</scope>
    <source>
        <strain>CFT073 / ATCC 700928 / UPEC</strain>
    </source>
</reference>
<sequence length="103" mass="11621">MGKLTLLLLAILVWLQYSLWFGKNGIHDYTRVNNDVAAQQATNAKLKARNDQLFAEIDDLNGGQEALEERARNELSMTRPGETFYRLVPDASKRAQSAGQNNR</sequence>
<comment type="function">
    <text evidence="1">Essential cell division protein. May link together the upstream cell division proteins, which are predominantly cytoplasmic, with the downstream cell division proteins, which are predominantly periplasmic.</text>
</comment>
<comment type="subunit">
    <text evidence="1">Part of a complex composed of FtsB, FtsL and FtsQ.</text>
</comment>
<comment type="subcellular location">
    <subcellularLocation>
        <location evidence="1">Cell inner membrane</location>
        <topology evidence="1">Single-pass type II membrane protein</topology>
    </subcellularLocation>
    <text evidence="1">Localizes to the division septum.</text>
</comment>
<comment type="similarity">
    <text evidence="1">Belongs to the FtsB family.</text>
</comment>
<proteinExistence type="inferred from homology"/>
<protein>
    <recommendedName>
        <fullName evidence="1">Cell division protein FtsB</fullName>
    </recommendedName>
</protein>
<keyword id="KW-0131">Cell cycle</keyword>
<keyword id="KW-0132">Cell division</keyword>
<keyword id="KW-0997">Cell inner membrane</keyword>
<keyword id="KW-1003">Cell membrane</keyword>
<keyword id="KW-0175">Coiled coil</keyword>
<keyword id="KW-0472">Membrane</keyword>
<keyword id="KW-1185">Reference proteome</keyword>
<keyword id="KW-0812">Transmembrane</keyword>
<keyword id="KW-1133">Transmembrane helix</keyword>
<evidence type="ECO:0000255" key="1">
    <source>
        <dbReference type="HAMAP-Rule" id="MF_00599"/>
    </source>
</evidence>
<accession>Q8FEJ4</accession>
<gene>
    <name evidence="1" type="primary">ftsB</name>
    <name type="ordered locus">c3315</name>
</gene>
<organism>
    <name type="scientific">Escherichia coli O6:H1 (strain CFT073 / ATCC 700928 / UPEC)</name>
    <dbReference type="NCBI Taxonomy" id="199310"/>
    <lineage>
        <taxon>Bacteria</taxon>
        <taxon>Pseudomonadati</taxon>
        <taxon>Pseudomonadota</taxon>
        <taxon>Gammaproteobacteria</taxon>
        <taxon>Enterobacterales</taxon>
        <taxon>Enterobacteriaceae</taxon>
        <taxon>Escherichia</taxon>
    </lineage>
</organism>